<gene>
    <name evidence="1" type="primary">pepX</name>
    <name type="ordered locus">SP_0894</name>
</gene>
<dbReference type="EC" id="3.4.14.11" evidence="1"/>
<dbReference type="EMBL" id="AE005672">
    <property type="protein sequence ID" value="AAK75021.1"/>
    <property type="molecule type" value="Genomic_DNA"/>
</dbReference>
<dbReference type="PIR" id="D95103">
    <property type="entry name" value="D95103"/>
</dbReference>
<dbReference type="RefSeq" id="WP_001212037.1">
    <property type="nucleotide sequence ID" value="NZ_CP155539.1"/>
</dbReference>
<dbReference type="SMR" id="Q97RC8"/>
<dbReference type="ESTHER" id="strpn-pepx">
    <property type="family name" value="Lactobacillus_peptidase"/>
</dbReference>
<dbReference type="MEROPS" id="S15.001"/>
<dbReference type="PaxDb" id="170187-SP_0894"/>
<dbReference type="EnsemblBacteria" id="AAK75021">
    <property type="protein sequence ID" value="AAK75021"/>
    <property type="gene ID" value="SP_0894"/>
</dbReference>
<dbReference type="KEGG" id="spn:SP_0894"/>
<dbReference type="eggNOG" id="COG2936">
    <property type="taxonomic scope" value="Bacteria"/>
</dbReference>
<dbReference type="PhylomeDB" id="Q97RC8"/>
<dbReference type="BioCyc" id="SPNE170187:G1FZB-917-MONOMER"/>
<dbReference type="Proteomes" id="UP000000585">
    <property type="component" value="Chromosome"/>
</dbReference>
<dbReference type="GO" id="GO:0005737">
    <property type="term" value="C:cytoplasm"/>
    <property type="evidence" value="ECO:0007669"/>
    <property type="project" value="UniProtKB-SubCell"/>
</dbReference>
<dbReference type="GO" id="GO:0004177">
    <property type="term" value="F:aminopeptidase activity"/>
    <property type="evidence" value="ECO:0007669"/>
    <property type="project" value="UniProtKB-KW"/>
</dbReference>
<dbReference type="GO" id="GO:0008239">
    <property type="term" value="F:dipeptidyl-peptidase activity"/>
    <property type="evidence" value="ECO:0007669"/>
    <property type="project" value="UniProtKB-UniRule"/>
</dbReference>
<dbReference type="GO" id="GO:0008236">
    <property type="term" value="F:serine-type peptidase activity"/>
    <property type="evidence" value="ECO:0007669"/>
    <property type="project" value="UniProtKB-KW"/>
</dbReference>
<dbReference type="GO" id="GO:0006508">
    <property type="term" value="P:proteolysis"/>
    <property type="evidence" value="ECO:0007669"/>
    <property type="project" value="UniProtKB-KW"/>
</dbReference>
<dbReference type="Gene3D" id="1.10.246.70">
    <property type="match status" value="1"/>
</dbReference>
<dbReference type="Gene3D" id="3.40.50.1820">
    <property type="entry name" value="alpha/beta hydrolase"/>
    <property type="match status" value="1"/>
</dbReference>
<dbReference type="Gene3D" id="2.60.120.260">
    <property type="entry name" value="Galactose-binding domain-like"/>
    <property type="match status" value="1"/>
</dbReference>
<dbReference type="HAMAP" id="MF_00698">
    <property type="entry name" value="Aminopeptidase_S15"/>
    <property type="match status" value="1"/>
</dbReference>
<dbReference type="InterPro" id="IPR029058">
    <property type="entry name" value="AB_hydrolase_fold"/>
</dbReference>
<dbReference type="InterPro" id="IPR008979">
    <property type="entry name" value="Galactose-bd-like_sf"/>
</dbReference>
<dbReference type="InterPro" id="IPR008252">
    <property type="entry name" value="Pept_S15_Xpro"/>
</dbReference>
<dbReference type="InterPro" id="IPR015251">
    <property type="entry name" value="PepX_N_dom"/>
</dbReference>
<dbReference type="InterPro" id="IPR036313">
    <property type="entry name" value="PepX_N_dom_sf"/>
</dbReference>
<dbReference type="InterPro" id="IPR000383">
    <property type="entry name" value="Xaa-Pro-like_dom"/>
</dbReference>
<dbReference type="InterPro" id="IPR013736">
    <property type="entry name" value="Xaa-Pro_dipept_C"/>
</dbReference>
<dbReference type="InterPro" id="IPR050585">
    <property type="entry name" value="Xaa-Pro_dipeptidyl-ppase/CocE"/>
</dbReference>
<dbReference type="NCBIfam" id="NF003783">
    <property type="entry name" value="PRK05371.1-4"/>
    <property type="match status" value="1"/>
</dbReference>
<dbReference type="PANTHER" id="PTHR43056:SF10">
    <property type="entry name" value="COCE_NOND FAMILY, PUTATIVE (AFU_ORTHOLOGUE AFUA_7G00600)-RELATED"/>
    <property type="match status" value="1"/>
</dbReference>
<dbReference type="PANTHER" id="PTHR43056">
    <property type="entry name" value="PEPTIDASE S9 PROLYL OLIGOPEPTIDASE"/>
    <property type="match status" value="1"/>
</dbReference>
<dbReference type="Pfam" id="PF02129">
    <property type="entry name" value="Peptidase_S15"/>
    <property type="match status" value="1"/>
</dbReference>
<dbReference type="Pfam" id="PF08530">
    <property type="entry name" value="PepX_C"/>
    <property type="match status" value="1"/>
</dbReference>
<dbReference type="Pfam" id="PF09168">
    <property type="entry name" value="PepX_N"/>
    <property type="match status" value="1"/>
</dbReference>
<dbReference type="PRINTS" id="PR00923">
    <property type="entry name" value="LACTOPTASE"/>
</dbReference>
<dbReference type="SMART" id="SM00939">
    <property type="entry name" value="PepX_C"/>
    <property type="match status" value="1"/>
</dbReference>
<dbReference type="SMART" id="SM00940">
    <property type="entry name" value="PepX_N"/>
    <property type="match status" value="1"/>
</dbReference>
<dbReference type="SUPFAM" id="SSF53474">
    <property type="entry name" value="alpha/beta-Hydrolases"/>
    <property type="match status" value="1"/>
</dbReference>
<dbReference type="SUPFAM" id="SSF49785">
    <property type="entry name" value="Galactose-binding domain-like"/>
    <property type="match status" value="1"/>
</dbReference>
<dbReference type="SUPFAM" id="SSF81761">
    <property type="entry name" value="X-Prolyl dipeptidyl aminopeptidase PepX, N-terminal domain"/>
    <property type="match status" value="1"/>
</dbReference>
<reference key="1">
    <citation type="journal article" date="2001" name="Science">
        <title>Complete genome sequence of a virulent isolate of Streptococcus pneumoniae.</title>
        <authorList>
            <person name="Tettelin H."/>
            <person name="Nelson K.E."/>
            <person name="Paulsen I.T."/>
            <person name="Eisen J.A."/>
            <person name="Read T.D."/>
            <person name="Peterson S.N."/>
            <person name="Heidelberg J.F."/>
            <person name="DeBoy R.T."/>
            <person name="Haft D.H."/>
            <person name="Dodson R.J."/>
            <person name="Durkin A.S."/>
            <person name="Gwinn M.L."/>
            <person name="Kolonay J.F."/>
            <person name="Nelson W.C."/>
            <person name="Peterson J.D."/>
            <person name="Umayam L.A."/>
            <person name="White O."/>
            <person name="Salzberg S.L."/>
            <person name="Lewis M.R."/>
            <person name="Radune D."/>
            <person name="Holtzapple E.K."/>
            <person name="Khouri H.M."/>
            <person name="Wolf A.M."/>
            <person name="Utterback T.R."/>
            <person name="Hansen C.L."/>
            <person name="McDonald L.A."/>
            <person name="Feldblyum T.V."/>
            <person name="Angiuoli S.V."/>
            <person name="Dickinson T."/>
            <person name="Hickey E.K."/>
            <person name="Holt I.E."/>
            <person name="Loftus B.J."/>
            <person name="Yang F."/>
            <person name="Smith H.O."/>
            <person name="Venter J.C."/>
            <person name="Dougherty B.A."/>
            <person name="Morrison D.A."/>
            <person name="Hollingshead S.K."/>
            <person name="Fraser C.M."/>
        </authorList>
    </citation>
    <scope>NUCLEOTIDE SEQUENCE [LARGE SCALE GENOMIC DNA]</scope>
    <source>
        <strain>ATCC BAA-334 / TIGR4</strain>
    </source>
</reference>
<comment type="function">
    <text evidence="1">Removes N-terminal dipeptides sequentially from polypeptides having unsubstituted N-termini provided that the penultimate residue is proline.</text>
</comment>
<comment type="catalytic activity">
    <reaction evidence="1">
        <text>Hydrolyzes Xaa-Pro-|- bonds to release unblocked, N-terminal dipeptides from substrates including Ala-Pro-|-p-nitroanilide and (sequentially) Tyr-Pro-|-Phe-Pro-|-Gly-Pro-|-Ile.</text>
        <dbReference type="EC" id="3.4.14.11"/>
    </reaction>
</comment>
<comment type="subunit">
    <text evidence="1">Homodimer.</text>
</comment>
<comment type="subcellular location">
    <subcellularLocation>
        <location evidence="1">Cytoplasm</location>
    </subcellularLocation>
</comment>
<comment type="similarity">
    <text evidence="1">Belongs to the peptidase S15 family.</text>
</comment>
<proteinExistence type="inferred from homology"/>
<feature type="chain" id="PRO_0000220229" description="Xaa-Pro dipeptidyl-peptidase">
    <location>
        <begin position="1"/>
        <end position="757"/>
    </location>
</feature>
<feature type="active site" description="Charge relay system" evidence="1">
    <location>
        <position position="348"/>
    </location>
</feature>
<feature type="active site" description="Charge relay system" evidence="1">
    <location>
        <position position="468"/>
    </location>
</feature>
<feature type="active site" description="Charge relay system" evidence="1">
    <location>
        <position position="498"/>
    </location>
</feature>
<evidence type="ECO:0000255" key="1">
    <source>
        <dbReference type="HAMAP-Rule" id="MF_00698"/>
    </source>
</evidence>
<sequence length="757" mass="86885">MRFNQYSYINFPKENVLSELKKCGFDLQNTANHKDSLETFLRRFFFTYQDTNYPLSILAADKKTDLLTFFQSEDELTADIFYTVAFQLLGFSYLVDFEDSDVFRKETGFPIIYGDLIENLYQLLNTRTKKGNTLIDQLVSDGLIPEDNDYHYFNGKSLATFSNQDVIREVVYVESRVDTDQKGLSDLVKVSIIRPRFDGKIPAIMTASPYHQGTNDKASDKALYKMEGELEVKLPHKIELEKPQLNLVQPQGKAELIAEAEEKLTHINSSYTLNDYFLPRGFANLYVSGVGTKDSTGFMTNGDYQQIEAYKNVIDWLNGRCRAFTDHTRQRQVKADWSNGKVATTGLSYLGTMSNGLATTGVDGLEVIIAEAGISSWYNYYRENGLVTSPGGYPGEDFDSLAELTYSRNLLAGDYIRGNEAHQADLEKVKAQLDRKTGDYNQFWHDRNYLLNAHKVKAEVVFTHGSQDWNVKPLHVYQMFHALPTHIHKHLFFHNGAHVYMNNWQSIDFRESINALLTKKLLGQETDFQLPTVIWQDNTAPQTWLSLDNFGGQENCETFSLGQEEQAIQNQYPDKDFERYGKTYQTFNTELYQGKANQITINLPVTKDLHLNGRAQLNLRIKSSTNKGLLSAQLLEFGQKKYLQPYPAILSARTIDNGRYHMLENLCELPFRPEAQRVVTKGYLNLQNRNDLLLVEDITADEWMDVQFELQPTIYKLKEGDTLRLVLYTTDFEITIRDNTDYHLTVDLAQSMLTLPC</sequence>
<keyword id="KW-0031">Aminopeptidase</keyword>
<keyword id="KW-0963">Cytoplasm</keyword>
<keyword id="KW-0378">Hydrolase</keyword>
<keyword id="KW-0645">Protease</keyword>
<keyword id="KW-1185">Reference proteome</keyword>
<keyword id="KW-0720">Serine protease</keyword>
<name>PEPX_STRPN</name>
<accession>Q97RC8</accession>
<organism>
    <name type="scientific">Streptococcus pneumoniae serotype 4 (strain ATCC BAA-334 / TIGR4)</name>
    <dbReference type="NCBI Taxonomy" id="170187"/>
    <lineage>
        <taxon>Bacteria</taxon>
        <taxon>Bacillati</taxon>
        <taxon>Bacillota</taxon>
        <taxon>Bacilli</taxon>
        <taxon>Lactobacillales</taxon>
        <taxon>Streptococcaceae</taxon>
        <taxon>Streptococcus</taxon>
    </lineage>
</organism>
<protein>
    <recommendedName>
        <fullName evidence="1">Xaa-Pro dipeptidyl-peptidase</fullName>
        <ecNumber evidence="1">3.4.14.11</ecNumber>
    </recommendedName>
    <alternativeName>
        <fullName evidence="1">X-Pro dipeptidyl-peptidase</fullName>
    </alternativeName>
    <alternativeName>
        <fullName evidence="1">X-prolyl-dipeptidyl aminopeptidase</fullName>
        <shortName evidence="1">X-PDAP</shortName>
    </alternativeName>
</protein>